<feature type="chain" id="PRO_0000243905" description="Ankyrin repeat domain-containing protein 30A">
    <location>
        <begin position="1"/>
        <end position="1397"/>
    </location>
</feature>
<feature type="repeat" description="ANK 1">
    <location>
        <begin position="72"/>
        <end position="101"/>
    </location>
</feature>
<feature type="repeat" description="ANK 2">
    <location>
        <begin position="105"/>
        <end position="134"/>
    </location>
</feature>
<feature type="repeat" description="ANK 3">
    <location>
        <begin position="138"/>
        <end position="167"/>
    </location>
</feature>
<feature type="repeat" description="ANK 4">
    <location>
        <begin position="171"/>
        <end position="200"/>
    </location>
</feature>
<feature type="repeat" description="ANK 5">
    <location>
        <begin position="204"/>
        <end position="233"/>
    </location>
</feature>
<feature type="repeat" description="ANK 6">
    <location>
        <begin position="237"/>
        <end position="271"/>
    </location>
</feature>
<feature type="region of interest" description="Disordered" evidence="2">
    <location>
        <begin position="267"/>
        <end position="376"/>
    </location>
</feature>
<feature type="region of interest" description="Disordered" evidence="2">
    <location>
        <begin position="453"/>
        <end position="482"/>
    </location>
</feature>
<feature type="region of interest" description="Disordered" evidence="2">
    <location>
        <begin position="782"/>
        <end position="807"/>
    </location>
</feature>
<feature type="region of interest" description="Disordered" evidence="2">
    <location>
        <begin position="902"/>
        <end position="931"/>
    </location>
</feature>
<feature type="coiled-coil region" evidence="1">
    <location>
        <begin position="998"/>
        <end position="1188"/>
    </location>
</feature>
<feature type="coiled-coil region" evidence="1">
    <location>
        <begin position="1282"/>
        <end position="1327"/>
    </location>
</feature>
<feature type="compositionally biased region" description="Polar residues" evidence="2">
    <location>
        <begin position="267"/>
        <end position="279"/>
    </location>
</feature>
<feature type="compositionally biased region" description="Basic and acidic residues" evidence="2">
    <location>
        <begin position="290"/>
        <end position="304"/>
    </location>
</feature>
<feature type="compositionally biased region" description="Basic and acidic residues" evidence="2">
    <location>
        <begin position="312"/>
        <end position="326"/>
    </location>
</feature>
<feature type="compositionally biased region" description="Polar residues" evidence="2">
    <location>
        <begin position="455"/>
        <end position="467"/>
    </location>
</feature>
<feature type="compositionally biased region" description="Basic and acidic residues" evidence="2">
    <location>
        <begin position="782"/>
        <end position="800"/>
    </location>
</feature>
<feature type="compositionally biased region" description="Basic and acidic residues" evidence="2">
    <location>
        <begin position="913"/>
        <end position="931"/>
    </location>
</feature>
<feature type="sequence variant" id="VAR_035611" description="In a breast cancer sample; somatic mutation." evidence="4">
    <original>Q</original>
    <variation>E</variation>
    <location>
        <position position="227"/>
    </location>
</feature>
<feature type="sequence variant" id="VAR_033504" description="In dbSNP:rs16937417.">
    <original>T</original>
    <variation>A</variation>
    <location>
        <position position="611"/>
    </location>
</feature>
<feature type="sequence variant" id="VAR_033505" description="In dbSNP:rs1209750.">
    <original>K</original>
    <variation>N</variation>
    <location>
        <position position="917"/>
    </location>
</feature>
<feature type="sequence variant" id="VAR_055515" description="In dbSNP:rs1200875.">
    <original>R</original>
    <variation>C</variation>
    <location>
        <position position="985"/>
    </location>
</feature>
<feature type="sequence conflict" description="In Ref. 2; AAK27325." evidence="5" ref="2">
    <original>T</original>
    <variation>M</variation>
    <location>
        <position position="141"/>
    </location>
</feature>
<feature type="sequence conflict" description="In Ref. 2; AAK27325." evidence="5" ref="2">
    <original>L</original>
    <variation>W</variation>
    <location>
        <position position="665"/>
    </location>
</feature>
<accession>Q9BXX3</accession>
<accession>Q5W025</accession>
<organism>
    <name type="scientific">Homo sapiens</name>
    <name type="common">Human</name>
    <dbReference type="NCBI Taxonomy" id="9606"/>
    <lineage>
        <taxon>Eukaryota</taxon>
        <taxon>Metazoa</taxon>
        <taxon>Chordata</taxon>
        <taxon>Craniata</taxon>
        <taxon>Vertebrata</taxon>
        <taxon>Euteleostomi</taxon>
        <taxon>Mammalia</taxon>
        <taxon>Eutheria</taxon>
        <taxon>Euarchontoglires</taxon>
        <taxon>Primates</taxon>
        <taxon>Haplorrhini</taxon>
        <taxon>Catarrhini</taxon>
        <taxon>Hominidae</taxon>
        <taxon>Homo</taxon>
    </lineage>
</organism>
<sequence length="1397" mass="158835">MEEISAAAVKVVPGPERPSPFSQLVYTSNDSYIVHSGDLRKIHKAASRGQVRKLEKMTKRKKTINLNIQDAQKRTALHWACVNGHEEVVTFLVDRKCQLDVLDGEHRTPLMKALQCHQEACANILIDSGADINLVDVYGNTALHYAVYSEILSVVAKLLSHGAVIEVHNKASLTPLLLSITKRSEQIVEFLLIKNANANAVNKYKCTALMLAVCHGSSEIVGMLLQQNVDVFAADICGVTAEHYAVTCGFHHIHEQIMEYIRKLSKNHQNTNPEGTSAGTPDEAAPLAERTPDTAESLVEKTPDEAAPLVERTPDTAESLVEKTPDEAASLVEGTSDKIQCLEKATSGKFEQSAEETPREITSPAKETSEKFTWPAKGRPRKIAWEKKEDTPREIMSPAKETSEKFTWAAKGRPRKIAWEKKETPVKTGCVARVTSNKTKVLEKGRSKMIACPTKESSTKASANDQRFPSESKQEEDEEYSCDSRSLFESSAKIQVCIPESIYQKVMEINREVEEPPKKPSAFKPAIEMQNSVPNKAFELKNEQTLRADPMFPPESKQKDYEENSWDSESLCETVSQKDVCLPKATHQKEIDKINGKLEESPNKDGLLKATCGMKVSIPTKALELKDMQTFKAEPPGKPSAFEPATEMQKSVPNKALELKNEQTLRADEILPSESKQKDYEENSWDTESLCETVSQKDVCLPKAAHQKEIDKINGKLEGSPVKDGLLKANCGMKVSIPTKALELMDMQTFKAEPPEKPSAFEPAIEMQKSVPNKALELKNEQTLRADEILPSESKQKDYEESSWDSESLCETVSQKDVCLPKATHQKEIDKINGKLEESPDNDGFLKAPCRMKVSIPTKALELMDMQTFKAEPPEKPSAFEPAIEMQKSVPNKALELKNEQTLRADQMFPSESKQKKVEENSWDSESLRETVSQKDVCVPKATHQKEMDKISGKLEDSTSLSKILDTVHSCERARELQKDHCEQRTGKMEQMKKKFCVLKKKLSEAKEIKSQLENQKVKWEQELCSVRLTLNQEEEKRRNADILNEKIREELGRIEEQHRKELEVKQQLEQALRIQDIELKSVESNLNQVSHTHENENYLLHENCMLKKEIAMLKLEIATLKHQYQEKENKYFEDIKILKEKNAELQMTLKLKEESLTKRASQYSGQLKVLIAENTMLTSKLKEKQDKEILEAEIESHHPRLASAVQDHDQIVTSRKSQEPAFHIAGDACLQRKMNVDVSSTIYNNEVLHQPLSEAQRKSKSLKINLNYAGDALRENTLVSEHAQRDQRETQCQMKEAEHMYQNEQDNVNKHTEQQESLDQKLFQLQSKNMWLQQQLVHAHKKADNKSKITIDIHFLERKMQHHLLKEKNEEIFNYNNHLKNRIYQYEKEKAETENS</sequence>
<gene>
    <name type="primary">ANKRD30A</name>
</gene>
<name>AN30A_HUMAN</name>
<reference key="1">
    <citation type="journal article" date="2004" name="Nature">
        <title>The DNA sequence and comparative analysis of human chromosome 10.</title>
        <authorList>
            <person name="Deloukas P."/>
            <person name="Earthrowl M.E."/>
            <person name="Grafham D.V."/>
            <person name="Rubenfield M."/>
            <person name="French L."/>
            <person name="Steward C.A."/>
            <person name="Sims S.K."/>
            <person name="Jones M.C."/>
            <person name="Searle S."/>
            <person name="Scott C."/>
            <person name="Howe K."/>
            <person name="Hunt S.E."/>
            <person name="Andrews T.D."/>
            <person name="Gilbert J.G.R."/>
            <person name="Swarbreck D."/>
            <person name="Ashurst J.L."/>
            <person name="Taylor A."/>
            <person name="Battles J."/>
            <person name="Bird C.P."/>
            <person name="Ainscough R."/>
            <person name="Almeida J.P."/>
            <person name="Ashwell R.I.S."/>
            <person name="Ambrose K.D."/>
            <person name="Babbage A.K."/>
            <person name="Bagguley C.L."/>
            <person name="Bailey J."/>
            <person name="Banerjee R."/>
            <person name="Bates K."/>
            <person name="Beasley H."/>
            <person name="Bray-Allen S."/>
            <person name="Brown A.J."/>
            <person name="Brown J.Y."/>
            <person name="Burford D.C."/>
            <person name="Burrill W."/>
            <person name="Burton J."/>
            <person name="Cahill P."/>
            <person name="Camire D."/>
            <person name="Carter N.P."/>
            <person name="Chapman J.C."/>
            <person name="Clark S.Y."/>
            <person name="Clarke G."/>
            <person name="Clee C.M."/>
            <person name="Clegg S."/>
            <person name="Corby N."/>
            <person name="Coulson A."/>
            <person name="Dhami P."/>
            <person name="Dutta I."/>
            <person name="Dunn M."/>
            <person name="Faulkner L."/>
            <person name="Frankish A."/>
            <person name="Frankland J.A."/>
            <person name="Garner P."/>
            <person name="Garnett J."/>
            <person name="Gribble S."/>
            <person name="Griffiths C."/>
            <person name="Grocock R."/>
            <person name="Gustafson E."/>
            <person name="Hammond S."/>
            <person name="Harley J.L."/>
            <person name="Hart E."/>
            <person name="Heath P.D."/>
            <person name="Ho T.P."/>
            <person name="Hopkins B."/>
            <person name="Horne J."/>
            <person name="Howden P.J."/>
            <person name="Huckle E."/>
            <person name="Hynds C."/>
            <person name="Johnson C."/>
            <person name="Johnson D."/>
            <person name="Kana A."/>
            <person name="Kay M."/>
            <person name="Kimberley A.M."/>
            <person name="Kershaw J.K."/>
            <person name="Kokkinaki M."/>
            <person name="Laird G.K."/>
            <person name="Lawlor S."/>
            <person name="Lee H.M."/>
            <person name="Leongamornlert D.A."/>
            <person name="Laird G."/>
            <person name="Lloyd C."/>
            <person name="Lloyd D.M."/>
            <person name="Loveland J."/>
            <person name="Lovell J."/>
            <person name="McLaren S."/>
            <person name="McLay K.E."/>
            <person name="McMurray A."/>
            <person name="Mashreghi-Mohammadi M."/>
            <person name="Matthews L."/>
            <person name="Milne S."/>
            <person name="Nickerson T."/>
            <person name="Nguyen M."/>
            <person name="Overton-Larty E."/>
            <person name="Palmer S.A."/>
            <person name="Pearce A.V."/>
            <person name="Peck A.I."/>
            <person name="Pelan S."/>
            <person name="Phillimore B."/>
            <person name="Porter K."/>
            <person name="Rice C.M."/>
            <person name="Rogosin A."/>
            <person name="Ross M.T."/>
            <person name="Sarafidou T."/>
            <person name="Sehra H.K."/>
            <person name="Shownkeen R."/>
            <person name="Skuce C.D."/>
            <person name="Smith M."/>
            <person name="Standring L."/>
            <person name="Sycamore N."/>
            <person name="Tester J."/>
            <person name="Thorpe A."/>
            <person name="Torcasso W."/>
            <person name="Tracey A."/>
            <person name="Tromans A."/>
            <person name="Tsolas J."/>
            <person name="Wall M."/>
            <person name="Walsh J."/>
            <person name="Wang H."/>
            <person name="Weinstock K."/>
            <person name="West A.P."/>
            <person name="Willey D.L."/>
            <person name="Whitehead S.L."/>
            <person name="Wilming L."/>
            <person name="Wray P.W."/>
            <person name="Young L."/>
            <person name="Chen Y."/>
            <person name="Lovering R.C."/>
            <person name="Moschonas N.K."/>
            <person name="Siebert R."/>
            <person name="Fechtel K."/>
            <person name="Bentley D."/>
            <person name="Durbin R.M."/>
            <person name="Hubbard T."/>
            <person name="Doucette-Stamm L."/>
            <person name="Beck S."/>
            <person name="Smith D.R."/>
            <person name="Rogers J."/>
        </authorList>
    </citation>
    <scope>NUCLEOTIDE SEQUENCE [LARGE SCALE GENOMIC DNA]</scope>
</reference>
<reference key="2">
    <citation type="journal article" date="2001" name="Cancer Res.">
        <title>Identification of a tissue-specific putative transcription factor in breast tissue by serological screening of a breast cancer library.</title>
        <authorList>
            <person name="Jaeger D."/>
            <person name="Stockert E."/>
            <person name="Guere A.O."/>
            <person name="Scanlan M.J."/>
            <person name="Karbach J."/>
            <person name="Jaeger E."/>
            <person name="Knuth A."/>
            <person name="Old L.J."/>
            <person name="Chen Y.-T."/>
        </authorList>
    </citation>
    <scope>NUCLEOTIDE SEQUENCE [MRNA] OF 24-1397</scope>
    <scope>TISSUE SPECIFICITY</scope>
</reference>
<reference key="3">
    <citation type="journal article" date="2006" name="Gene">
        <title>Duplication and extensive remodeling shaped POTE family genes encoding proteins containing ankyrin repeat and coiled coil domains.</title>
        <authorList>
            <person name="Hahn Y."/>
            <person name="Bera T.K."/>
            <person name="Pastan I.H."/>
            <person name="Lee B."/>
        </authorList>
    </citation>
    <scope>IDENTIFICATION</scope>
</reference>
<reference key="4">
    <citation type="journal article" date="2006" name="Science">
        <title>The consensus coding sequences of human breast and colorectal cancers.</title>
        <authorList>
            <person name="Sjoeblom T."/>
            <person name="Jones S."/>
            <person name="Wood L.D."/>
            <person name="Parsons D.W."/>
            <person name="Lin J."/>
            <person name="Barber T.D."/>
            <person name="Mandelker D."/>
            <person name="Leary R.J."/>
            <person name="Ptak J."/>
            <person name="Silliman N."/>
            <person name="Szabo S."/>
            <person name="Buckhaults P."/>
            <person name="Farrell C."/>
            <person name="Meeh P."/>
            <person name="Markowitz S.D."/>
            <person name="Willis J."/>
            <person name="Dawson D."/>
            <person name="Willson J.K.V."/>
            <person name="Gazdar A.F."/>
            <person name="Hartigan J."/>
            <person name="Wu L."/>
            <person name="Liu C."/>
            <person name="Parmigiani G."/>
            <person name="Park B.H."/>
            <person name="Bachman K.E."/>
            <person name="Papadopoulos N."/>
            <person name="Vogelstein B."/>
            <person name="Kinzler K.W."/>
            <person name="Velculescu V.E."/>
        </authorList>
    </citation>
    <scope>VARIANT [LARGE SCALE ANALYSIS] GLU-227</scope>
</reference>
<protein>
    <recommendedName>
        <fullName>Ankyrin repeat domain-containing protein 30A</fullName>
    </recommendedName>
    <alternativeName>
        <fullName>Serologically defined breast cancer antigen NY-BR-1</fullName>
    </alternativeName>
</protein>
<proteinExistence type="evidence at protein level"/>
<dbReference type="EMBL" id="AC067744">
    <property type="status" value="NOT_ANNOTATED_CDS"/>
    <property type="molecule type" value="Genomic_DNA"/>
</dbReference>
<dbReference type="EMBL" id="AL157387">
    <property type="status" value="NOT_ANNOTATED_CDS"/>
    <property type="molecule type" value="Genomic_DNA"/>
</dbReference>
<dbReference type="EMBL" id="AL357148">
    <property type="status" value="NOT_ANNOTATED_CDS"/>
    <property type="molecule type" value="Genomic_DNA"/>
</dbReference>
<dbReference type="EMBL" id="AF269087">
    <property type="protein sequence ID" value="AAK27325.1"/>
    <property type="status" value="ALT_INIT"/>
    <property type="molecule type" value="mRNA"/>
</dbReference>
<dbReference type="CCDS" id="CCDS7193.2"/>
<dbReference type="RefSeq" id="NP_443723.3">
    <property type="nucleotide sequence ID" value="NM_052997.3"/>
</dbReference>
<dbReference type="PDB" id="6R2L">
    <property type="method" value="X-ray"/>
    <property type="resolution" value="2.30 A"/>
    <property type="chains" value="C=960-968"/>
</dbReference>
<dbReference type="PDBsum" id="6R2L"/>
<dbReference type="SMR" id="Q9BXX3"/>
<dbReference type="BioGRID" id="124793">
    <property type="interactions" value="8"/>
</dbReference>
<dbReference type="IntAct" id="Q9BXX3">
    <property type="interactions" value="4"/>
</dbReference>
<dbReference type="STRING" id="9606.ENSP00000354432"/>
<dbReference type="GlyGen" id="Q9BXX3">
    <property type="glycosylation" value="6 sites, 1 O-linked glycan (5 sites)"/>
</dbReference>
<dbReference type="iPTMnet" id="Q9BXX3"/>
<dbReference type="PhosphoSitePlus" id="Q9BXX3"/>
<dbReference type="BioMuta" id="ANKRD30A"/>
<dbReference type="DMDM" id="182676432"/>
<dbReference type="jPOST" id="Q9BXX3"/>
<dbReference type="MassIVE" id="Q9BXX3"/>
<dbReference type="PaxDb" id="9606-ENSP00000354432"/>
<dbReference type="PeptideAtlas" id="Q9BXX3"/>
<dbReference type="ProteomicsDB" id="79538"/>
<dbReference type="Antibodypedia" id="1797">
    <property type="antibodies" value="57 antibodies from 20 providers"/>
</dbReference>
<dbReference type="DNASU" id="91074"/>
<dbReference type="Ensembl" id="ENST00000361713.2">
    <property type="protein sequence ID" value="ENSP00000354432.2"/>
    <property type="gene ID" value="ENSG00000148513.20"/>
</dbReference>
<dbReference type="Ensembl" id="ENST00000602533.7">
    <property type="protein sequence ID" value="ENSP00000473551.2"/>
    <property type="gene ID" value="ENSG00000148513.20"/>
</dbReference>
<dbReference type="GeneID" id="91074"/>
<dbReference type="KEGG" id="hsa:91074"/>
<dbReference type="MANE-Select" id="ENST00000361713.2">
    <property type="protein sequence ID" value="ENSP00000354432.2"/>
    <property type="RefSeq nucleotide sequence ID" value="NM_052997.3"/>
    <property type="RefSeq protein sequence ID" value="NP_443723.3"/>
</dbReference>
<dbReference type="UCSC" id="uc001iza.2">
    <property type="organism name" value="human"/>
</dbReference>
<dbReference type="AGR" id="HGNC:17234"/>
<dbReference type="CTD" id="91074"/>
<dbReference type="DisGeNET" id="91074"/>
<dbReference type="GeneCards" id="ANKRD30A"/>
<dbReference type="HGNC" id="HGNC:17234">
    <property type="gene designation" value="ANKRD30A"/>
</dbReference>
<dbReference type="HPA" id="ENSG00000148513">
    <property type="expression patterns" value="Tissue enriched (breast)"/>
</dbReference>
<dbReference type="MIM" id="610856">
    <property type="type" value="gene"/>
</dbReference>
<dbReference type="neXtProt" id="NX_Q9BXX3"/>
<dbReference type="OpenTargets" id="ENSG00000148513"/>
<dbReference type="PharmGKB" id="PA134974407"/>
<dbReference type="VEuPathDB" id="HostDB:ENSG00000148513"/>
<dbReference type="eggNOG" id="KOG0504">
    <property type="taxonomic scope" value="Eukaryota"/>
</dbReference>
<dbReference type="GeneTree" id="ENSGT00940000165686"/>
<dbReference type="InParanoid" id="Q9BXX3"/>
<dbReference type="OrthoDB" id="9537697at2759"/>
<dbReference type="PAN-GO" id="Q9BXX3">
    <property type="GO annotations" value="0 GO annotations based on evolutionary models"/>
</dbReference>
<dbReference type="PhylomeDB" id="Q9BXX3"/>
<dbReference type="TreeFam" id="TF333496"/>
<dbReference type="PathwayCommons" id="Q9BXX3"/>
<dbReference type="BioGRID-ORCS" id="91074">
    <property type="hits" value="11 hits in 1145 CRISPR screens"/>
</dbReference>
<dbReference type="ChiTaRS" id="ANKRD30A">
    <property type="organism name" value="human"/>
</dbReference>
<dbReference type="GenomeRNAi" id="91074"/>
<dbReference type="Pharos" id="Q9BXX3">
    <property type="development level" value="Tbio"/>
</dbReference>
<dbReference type="PRO" id="PR:Q9BXX3"/>
<dbReference type="Proteomes" id="UP000005640">
    <property type="component" value="Chromosome 10"/>
</dbReference>
<dbReference type="RNAct" id="Q9BXX3">
    <property type="molecule type" value="protein"/>
</dbReference>
<dbReference type="Bgee" id="ENSG00000148513">
    <property type="expression patterns" value="Expressed in epithelium of mammary gland and 56 other cell types or tissues"/>
</dbReference>
<dbReference type="ExpressionAtlas" id="Q9BXX3">
    <property type="expression patterns" value="baseline and differential"/>
</dbReference>
<dbReference type="Gene3D" id="1.25.40.20">
    <property type="entry name" value="Ankyrin repeat-containing domain"/>
    <property type="match status" value="2"/>
</dbReference>
<dbReference type="InterPro" id="IPR050657">
    <property type="entry name" value="Ankyrin_repeat_domain"/>
</dbReference>
<dbReference type="InterPro" id="IPR002110">
    <property type="entry name" value="Ankyrin_rpt"/>
</dbReference>
<dbReference type="InterPro" id="IPR036770">
    <property type="entry name" value="Ankyrin_rpt-contain_sf"/>
</dbReference>
<dbReference type="InterPro" id="IPR039497">
    <property type="entry name" value="CC144C-like_CC_dom"/>
</dbReference>
<dbReference type="PANTHER" id="PTHR24147">
    <property type="entry name" value="ANKYRIN REPEAT DOMAIN 36-RELATED"/>
    <property type="match status" value="1"/>
</dbReference>
<dbReference type="PANTHER" id="PTHR24147:SF63">
    <property type="entry name" value="ANKYRIN REPEAT DOMAIN-CONTAINING PROTEIN 30A"/>
    <property type="match status" value="1"/>
</dbReference>
<dbReference type="Pfam" id="PF12796">
    <property type="entry name" value="Ank_2"/>
    <property type="match status" value="2"/>
</dbReference>
<dbReference type="Pfam" id="PF14915">
    <property type="entry name" value="CCDC144C"/>
    <property type="match status" value="2"/>
</dbReference>
<dbReference type="SMART" id="SM00248">
    <property type="entry name" value="ANK"/>
    <property type="match status" value="6"/>
</dbReference>
<dbReference type="SUPFAM" id="SSF48403">
    <property type="entry name" value="Ankyrin repeat"/>
    <property type="match status" value="1"/>
</dbReference>
<dbReference type="PROSITE" id="PS50297">
    <property type="entry name" value="ANK_REP_REGION"/>
    <property type="match status" value="1"/>
</dbReference>
<dbReference type="PROSITE" id="PS50088">
    <property type="entry name" value="ANK_REPEAT"/>
    <property type="match status" value="4"/>
</dbReference>
<evidence type="ECO:0000255" key="1"/>
<evidence type="ECO:0000256" key="2">
    <source>
        <dbReference type="SAM" id="MobiDB-lite"/>
    </source>
</evidence>
<evidence type="ECO:0000269" key="3">
    <source>
    </source>
</evidence>
<evidence type="ECO:0000269" key="4">
    <source>
    </source>
</evidence>
<evidence type="ECO:0000305" key="5"/>
<keyword id="KW-0002">3D-structure</keyword>
<keyword id="KW-0040">ANK repeat</keyword>
<keyword id="KW-0175">Coiled coil</keyword>
<keyword id="KW-1267">Proteomics identification</keyword>
<keyword id="KW-1185">Reference proteome</keyword>
<keyword id="KW-0677">Repeat</keyword>
<comment type="tissue specificity">
    <text evidence="3">Mainly expressed in breast and testis. A very faint signal is detected in placenta. Also expressed in many breast cancer cells.</text>
</comment>
<comment type="caution">
    <text evidence="5">It is uncertain whether Met-1 or Met-57 is the initiator.</text>
</comment>
<comment type="sequence caution" evidence="5">
    <conflict type="erroneous initiation">
        <sequence resource="EMBL-CDS" id="AAK27325"/>
    </conflict>
    <text>Truncated N-terminus.</text>
</comment>